<dbReference type="EMBL" id="AC068602">
    <property type="protein sequence ID" value="AAF79278.1"/>
    <property type="status" value="ALT_SEQ"/>
    <property type="molecule type" value="Genomic_DNA"/>
</dbReference>
<dbReference type="EMBL" id="CP002684">
    <property type="protein sequence ID" value="AEE29778.1"/>
    <property type="molecule type" value="Genomic_DNA"/>
</dbReference>
<dbReference type="EMBL" id="CP002684">
    <property type="protein sequence ID" value="AEE29779.1"/>
    <property type="molecule type" value="Genomic_DNA"/>
</dbReference>
<dbReference type="EMBL" id="CP002684">
    <property type="protein sequence ID" value="ANM60908.1"/>
    <property type="molecule type" value="Genomic_DNA"/>
</dbReference>
<dbReference type="EMBL" id="AK117464">
    <property type="protein sequence ID" value="BAC42129.1"/>
    <property type="molecule type" value="mRNA"/>
</dbReference>
<dbReference type="EMBL" id="BT005012">
    <property type="protein sequence ID" value="AAO50545.1"/>
    <property type="molecule type" value="mRNA"/>
</dbReference>
<dbReference type="RefSeq" id="NP_001319039.1">
    <molecule id="Q8GYP6-1"/>
    <property type="nucleotide sequence ID" value="NM_001332378.1"/>
</dbReference>
<dbReference type="RefSeq" id="NP_173324.1">
    <molecule id="Q8GYP6-1"/>
    <property type="nucleotide sequence ID" value="NM_101747.3"/>
</dbReference>
<dbReference type="RefSeq" id="NP_973860.1">
    <molecule id="Q8GYP6-1"/>
    <property type="nucleotide sequence ID" value="NM_202131.1"/>
</dbReference>
<dbReference type="SMR" id="Q8GYP6"/>
<dbReference type="FunCoup" id="Q8GYP6">
    <property type="interactions" value="906"/>
</dbReference>
<dbReference type="STRING" id="3702.Q8GYP6"/>
<dbReference type="iPTMnet" id="Q8GYP6"/>
<dbReference type="PaxDb" id="3702-AT1G18900.3"/>
<dbReference type="EnsemblPlants" id="AT1G18900.1">
    <molecule id="Q8GYP6-1"/>
    <property type="protein sequence ID" value="AT1G18900.1"/>
    <property type="gene ID" value="AT1G18900"/>
</dbReference>
<dbReference type="EnsemblPlants" id="AT1G18900.2">
    <molecule id="Q8GYP6-1"/>
    <property type="protein sequence ID" value="AT1G18900.2"/>
    <property type="gene ID" value="AT1G18900"/>
</dbReference>
<dbReference type="EnsemblPlants" id="AT1G18900.4">
    <molecule id="Q8GYP6-1"/>
    <property type="protein sequence ID" value="AT1G18900.4"/>
    <property type="gene ID" value="AT1G18900"/>
</dbReference>
<dbReference type="GeneID" id="838471"/>
<dbReference type="Gramene" id="AT1G18900.1">
    <molecule id="Q8GYP6-1"/>
    <property type="protein sequence ID" value="AT1G18900.1"/>
    <property type="gene ID" value="AT1G18900"/>
</dbReference>
<dbReference type="Gramene" id="AT1G18900.2">
    <molecule id="Q8GYP6-1"/>
    <property type="protein sequence ID" value="AT1G18900.2"/>
    <property type="gene ID" value="AT1G18900"/>
</dbReference>
<dbReference type="Gramene" id="AT1G18900.4">
    <molecule id="Q8GYP6-1"/>
    <property type="protein sequence ID" value="AT1G18900.4"/>
    <property type="gene ID" value="AT1G18900"/>
</dbReference>
<dbReference type="KEGG" id="ath:AT1G18900"/>
<dbReference type="Araport" id="AT1G18900"/>
<dbReference type="TAIR" id="AT1G18900"/>
<dbReference type="eggNOG" id="KOG4197">
    <property type="taxonomic scope" value="Eukaryota"/>
</dbReference>
<dbReference type="HOGENOM" id="CLU_015575_1_0_1"/>
<dbReference type="InParanoid" id="Q8GYP6"/>
<dbReference type="OMA" id="QFRAINK"/>
<dbReference type="PhylomeDB" id="Q8GYP6"/>
<dbReference type="PRO" id="PR:Q8GYP6"/>
<dbReference type="Proteomes" id="UP000006548">
    <property type="component" value="Chromosome 1"/>
</dbReference>
<dbReference type="ExpressionAtlas" id="Q8GYP6">
    <property type="expression patterns" value="baseline and differential"/>
</dbReference>
<dbReference type="Gene3D" id="3.30.1370.110">
    <property type="match status" value="1"/>
</dbReference>
<dbReference type="Gene3D" id="1.25.40.10">
    <property type="entry name" value="Tetratricopeptide repeat domain"/>
    <property type="match status" value="3"/>
</dbReference>
<dbReference type="InterPro" id="IPR002885">
    <property type="entry name" value="Pentatricopeptide_rpt"/>
</dbReference>
<dbReference type="InterPro" id="IPR002625">
    <property type="entry name" value="Smr_dom"/>
</dbReference>
<dbReference type="InterPro" id="IPR036063">
    <property type="entry name" value="Smr_dom_sf"/>
</dbReference>
<dbReference type="InterPro" id="IPR011990">
    <property type="entry name" value="TPR-like_helical_dom_sf"/>
</dbReference>
<dbReference type="NCBIfam" id="TIGR00756">
    <property type="entry name" value="PPR"/>
    <property type="match status" value="8"/>
</dbReference>
<dbReference type="PANTHER" id="PTHR47447">
    <property type="entry name" value="OS03G0856100 PROTEIN"/>
    <property type="match status" value="1"/>
</dbReference>
<dbReference type="PANTHER" id="PTHR47447:SF13">
    <property type="entry name" value="SMR DOMAIN-CONTAINING PROTEIN"/>
    <property type="match status" value="1"/>
</dbReference>
<dbReference type="Pfam" id="PF01535">
    <property type="entry name" value="PPR"/>
    <property type="match status" value="2"/>
</dbReference>
<dbReference type="Pfam" id="PF12854">
    <property type="entry name" value="PPR_1"/>
    <property type="match status" value="1"/>
</dbReference>
<dbReference type="Pfam" id="PF13041">
    <property type="entry name" value="PPR_2"/>
    <property type="match status" value="3"/>
</dbReference>
<dbReference type="SMART" id="SM00463">
    <property type="entry name" value="SMR"/>
    <property type="match status" value="1"/>
</dbReference>
<dbReference type="SUPFAM" id="SSF160443">
    <property type="entry name" value="SMR domain-like"/>
    <property type="match status" value="1"/>
</dbReference>
<dbReference type="SUPFAM" id="SSF48452">
    <property type="entry name" value="TPR-like"/>
    <property type="match status" value="1"/>
</dbReference>
<dbReference type="PROSITE" id="PS51375">
    <property type="entry name" value="PPR"/>
    <property type="match status" value="9"/>
</dbReference>
<dbReference type="PROSITE" id="PS50828">
    <property type="entry name" value="SMR"/>
    <property type="match status" value="1"/>
</dbReference>
<sequence>MIRAKHISNLSSTARSFFLNGSRTSVTDGNSCVYSDDENCVSKRQQLRKEAGQTEKRPSSILPKPSVVGCILPGEVTKPVVPKKVDDFGRPSLLPQHVSSSPALPLKSHSVNYASTVVREEVEGKASSEPIGDQIFKAGIVAVNFLSDLSNCKIPSYDGGSDAFGLPKSCMVDPTRPISSVKSSNVKAIRREHFAKIYPRSAAKESSVGTTRNPSSNFRGAKEAERTGFVKGFRQVSNSVVGKSLPTTNNTYGKRTSVLQRPHIDSNRFVPSGFSNSSVEMMKGPSGTALTSRQYCNSGHIVENVSSVLRRFRWGPAAEEALQNLGLRIDAYQANQVLKQMNDYGNALGFFYWLKRQPGFKHDGHTYTTMVGNLGRAKQFGAINKLLDEMVRDGCQPNTVTYNRLIHSYGRANYLNEAMNVFNQMQEAGCKPDRVTYCTLIDIHAKAGFLDIAMDMYQRMQAGGLSPDTFTYSVIINCLGKAGHLPAAHKLFCEMVDQGCTPNLVTYNIMMDLHAKARNYQNALKLYRDMQNAGFEPDKVTYSIVMEVLGHCGYLEEAEAVFTEMQQKNWIPDEPVYGLLVDLWGKAGNVEKAWQWYQAMLHAGLRPNVPTCNSLLSTFLRVNKIAEAYELLQNMLALGLRPSLQTYTLLLSCCTDGRSKLDMGFCGQLMASTGHPAHMFLLKMPAAGPDGENVRNHANNFLDLMHSEDRESKRGLVDAVVDFLHKSGQKEEAGSVWEVAAQKNVFPDALREKSCSYWLINLHVMSEGTAVTALSRTLAWFRKQMLASGTCPSRIDIVTGWGRRSRVTGTSMVRQAVEELLNIFGSPFFTESGNSGCFVGSGEPLNRWLLQSHVERMHLL</sequence>
<name>PPR49_ARATH</name>
<reference key="1">
    <citation type="journal article" date="2000" name="Nature">
        <title>Sequence and analysis of chromosome 1 of the plant Arabidopsis thaliana.</title>
        <authorList>
            <person name="Theologis A."/>
            <person name="Ecker J.R."/>
            <person name="Palm C.J."/>
            <person name="Federspiel N.A."/>
            <person name="Kaul S."/>
            <person name="White O."/>
            <person name="Alonso J."/>
            <person name="Altafi H."/>
            <person name="Araujo R."/>
            <person name="Bowman C.L."/>
            <person name="Brooks S.Y."/>
            <person name="Buehler E."/>
            <person name="Chan A."/>
            <person name="Chao Q."/>
            <person name="Chen H."/>
            <person name="Cheuk R.F."/>
            <person name="Chin C.W."/>
            <person name="Chung M.K."/>
            <person name="Conn L."/>
            <person name="Conway A.B."/>
            <person name="Conway A.R."/>
            <person name="Creasy T.H."/>
            <person name="Dewar K."/>
            <person name="Dunn P."/>
            <person name="Etgu P."/>
            <person name="Feldblyum T.V."/>
            <person name="Feng J.-D."/>
            <person name="Fong B."/>
            <person name="Fujii C.Y."/>
            <person name="Gill J.E."/>
            <person name="Goldsmith A.D."/>
            <person name="Haas B."/>
            <person name="Hansen N.F."/>
            <person name="Hughes B."/>
            <person name="Huizar L."/>
            <person name="Hunter J.L."/>
            <person name="Jenkins J."/>
            <person name="Johnson-Hopson C."/>
            <person name="Khan S."/>
            <person name="Khaykin E."/>
            <person name="Kim C.J."/>
            <person name="Koo H.L."/>
            <person name="Kremenetskaia I."/>
            <person name="Kurtz D.B."/>
            <person name="Kwan A."/>
            <person name="Lam B."/>
            <person name="Langin-Hooper S."/>
            <person name="Lee A."/>
            <person name="Lee J.M."/>
            <person name="Lenz C.A."/>
            <person name="Li J.H."/>
            <person name="Li Y.-P."/>
            <person name="Lin X."/>
            <person name="Liu S.X."/>
            <person name="Liu Z.A."/>
            <person name="Luros J.S."/>
            <person name="Maiti R."/>
            <person name="Marziali A."/>
            <person name="Militscher J."/>
            <person name="Miranda M."/>
            <person name="Nguyen M."/>
            <person name="Nierman W.C."/>
            <person name="Osborne B.I."/>
            <person name="Pai G."/>
            <person name="Peterson J."/>
            <person name="Pham P.K."/>
            <person name="Rizzo M."/>
            <person name="Rooney T."/>
            <person name="Rowley D."/>
            <person name="Sakano H."/>
            <person name="Salzberg S.L."/>
            <person name="Schwartz J.R."/>
            <person name="Shinn P."/>
            <person name="Southwick A.M."/>
            <person name="Sun H."/>
            <person name="Tallon L.J."/>
            <person name="Tambunga G."/>
            <person name="Toriumi M.J."/>
            <person name="Town C.D."/>
            <person name="Utterback T."/>
            <person name="Van Aken S."/>
            <person name="Vaysberg M."/>
            <person name="Vysotskaia V.S."/>
            <person name="Walker M."/>
            <person name="Wu D."/>
            <person name="Yu G."/>
            <person name="Fraser C.M."/>
            <person name="Venter J.C."/>
            <person name="Davis R.W."/>
        </authorList>
    </citation>
    <scope>NUCLEOTIDE SEQUENCE [LARGE SCALE GENOMIC DNA]</scope>
    <source>
        <strain>cv. Columbia</strain>
    </source>
</reference>
<reference key="2">
    <citation type="journal article" date="2017" name="Plant J.">
        <title>Araport11: a complete reannotation of the Arabidopsis thaliana reference genome.</title>
        <authorList>
            <person name="Cheng C.Y."/>
            <person name="Krishnakumar V."/>
            <person name="Chan A.P."/>
            <person name="Thibaud-Nissen F."/>
            <person name="Schobel S."/>
            <person name="Town C.D."/>
        </authorList>
    </citation>
    <scope>GENOME REANNOTATION</scope>
    <source>
        <strain>cv. Columbia</strain>
    </source>
</reference>
<reference key="3">
    <citation type="journal article" date="2002" name="Science">
        <title>Functional annotation of a full-length Arabidopsis cDNA collection.</title>
        <authorList>
            <person name="Seki M."/>
            <person name="Narusaka M."/>
            <person name="Kamiya A."/>
            <person name="Ishida J."/>
            <person name="Satou M."/>
            <person name="Sakurai T."/>
            <person name="Nakajima M."/>
            <person name="Enju A."/>
            <person name="Akiyama K."/>
            <person name="Oono Y."/>
            <person name="Muramatsu M."/>
            <person name="Hayashizaki Y."/>
            <person name="Kawai J."/>
            <person name="Carninci P."/>
            <person name="Itoh M."/>
            <person name="Ishii Y."/>
            <person name="Arakawa T."/>
            <person name="Shibata K."/>
            <person name="Shinagawa A."/>
            <person name="Shinozaki K."/>
        </authorList>
    </citation>
    <scope>NUCLEOTIDE SEQUENCE [LARGE SCALE MRNA]</scope>
    <source>
        <strain>cv. Columbia</strain>
    </source>
</reference>
<reference key="4">
    <citation type="journal article" date="2003" name="Science">
        <title>Empirical analysis of transcriptional activity in the Arabidopsis genome.</title>
        <authorList>
            <person name="Yamada K."/>
            <person name="Lim J."/>
            <person name="Dale J.M."/>
            <person name="Chen H."/>
            <person name="Shinn P."/>
            <person name="Palm C.J."/>
            <person name="Southwick A.M."/>
            <person name="Wu H.C."/>
            <person name="Kim C.J."/>
            <person name="Nguyen M."/>
            <person name="Pham P.K."/>
            <person name="Cheuk R.F."/>
            <person name="Karlin-Newmann G."/>
            <person name="Liu S.X."/>
            <person name="Lam B."/>
            <person name="Sakano H."/>
            <person name="Wu T."/>
            <person name="Yu G."/>
            <person name="Miranda M."/>
            <person name="Quach H.L."/>
            <person name="Tripp M."/>
            <person name="Chang C.H."/>
            <person name="Lee J.M."/>
            <person name="Toriumi M.J."/>
            <person name="Chan M.M."/>
            <person name="Tang C.C."/>
            <person name="Onodera C.S."/>
            <person name="Deng J.M."/>
            <person name="Akiyama K."/>
            <person name="Ansari Y."/>
            <person name="Arakawa T."/>
            <person name="Banh J."/>
            <person name="Banno F."/>
            <person name="Bowser L."/>
            <person name="Brooks S.Y."/>
            <person name="Carninci P."/>
            <person name="Chao Q."/>
            <person name="Choy N."/>
            <person name="Enju A."/>
            <person name="Goldsmith A.D."/>
            <person name="Gurjal M."/>
            <person name="Hansen N.F."/>
            <person name="Hayashizaki Y."/>
            <person name="Johnson-Hopson C."/>
            <person name="Hsuan V.W."/>
            <person name="Iida K."/>
            <person name="Karnes M."/>
            <person name="Khan S."/>
            <person name="Koesema E."/>
            <person name="Ishida J."/>
            <person name="Jiang P.X."/>
            <person name="Jones T."/>
            <person name="Kawai J."/>
            <person name="Kamiya A."/>
            <person name="Meyers C."/>
            <person name="Nakajima M."/>
            <person name="Narusaka M."/>
            <person name="Seki M."/>
            <person name="Sakurai T."/>
            <person name="Satou M."/>
            <person name="Tamse R."/>
            <person name="Vaysberg M."/>
            <person name="Wallender E.K."/>
            <person name="Wong C."/>
            <person name="Yamamura Y."/>
            <person name="Yuan S."/>
            <person name="Shinozaki K."/>
            <person name="Davis R.W."/>
            <person name="Theologis A."/>
            <person name="Ecker J.R."/>
        </authorList>
    </citation>
    <scope>NUCLEOTIDE SEQUENCE [LARGE SCALE MRNA]</scope>
    <source>
        <strain>cv. Columbia</strain>
    </source>
</reference>
<reference key="5">
    <citation type="journal article" date="2004" name="Plant Cell">
        <title>Genome-wide analysis of Arabidopsis pentatricopeptide repeat proteins reveals their essential role in organelle biogenesis.</title>
        <authorList>
            <person name="Lurin C."/>
            <person name="Andres C."/>
            <person name="Aubourg S."/>
            <person name="Bellaoui M."/>
            <person name="Bitton F."/>
            <person name="Bruyere C."/>
            <person name="Caboche M."/>
            <person name="Debast C."/>
            <person name="Gualberto J."/>
            <person name="Hoffmann B."/>
            <person name="Lecharny A."/>
            <person name="Le Ret M."/>
            <person name="Martin-Magniette M.-L."/>
            <person name="Mireau H."/>
            <person name="Peeters N."/>
            <person name="Renou J.-P."/>
            <person name="Szurek B."/>
            <person name="Taconnat L."/>
            <person name="Small I."/>
        </authorList>
    </citation>
    <scope>GENE FAMILY</scope>
</reference>
<accession>Q8GYP6</accession>
<accession>Q9LME0</accession>
<proteinExistence type="evidence at transcript level"/>
<protein>
    <recommendedName>
        <fullName>Pentatricopeptide repeat-containing protein At1g18900</fullName>
    </recommendedName>
</protein>
<organism>
    <name type="scientific">Arabidopsis thaliana</name>
    <name type="common">Mouse-ear cress</name>
    <dbReference type="NCBI Taxonomy" id="3702"/>
    <lineage>
        <taxon>Eukaryota</taxon>
        <taxon>Viridiplantae</taxon>
        <taxon>Streptophyta</taxon>
        <taxon>Embryophyta</taxon>
        <taxon>Tracheophyta</taxon>
        <taxon>Spermatophyta</taxon>
        <taxon>Magnoliopsida</taxon>
        <taxon>eudicotyledons</taxon>
        <taxon>Gunneridae</taxon>
        <taxon>Pentapetalae</taxon>
        <taxon>rosids</taxon>
        <taxon>malvids</taxon>
        <taxon>Brassicales</taxon>
        <taxon>Brassicaceae</taxon>
        <taxon>Camelineae</taxon>
        <taxon>Arabidopsis</taxon>
    </lineage>
</organism>
<feature type="chain" id="PRO_0000342790" description="Pentatricopeptide repeat-containing protein At1g18900">
    <location>
        <begin position="1"/>
        <end position="860"/>
    </location>
</feature>
<feature type="repeat" description="PPR 1">
    <location>
        <begin position="363"/>
        <end position="397"/>
    </location>
</feature>
<feature type="repeat" description="PPR 2">
    <location>
        <begin position="398"/>
        <end position="432"/>
    </location>
</feature>
<feature type="repeat" description="PPR 3">
    <location>
        <begin position="433"/>
        <end position="467"/>
    </location>
</feature>
<feature type="repeat" description="PPR 4">
    <location>
        <begin position="468"/>
        <end position="502"/>
    </location>
</feature>
<feature type="repeat" description="PPR 5">
    <location>
        <begin position="503"/>
        <end position="537"/>
    </location>
</feature>
<feature type="repeat" description="PPR 6">
    <location>
        <begin position="538"/>
        <end position="572"/>
    </location>
</feature>
<feature type="repeat" description="PPR 7">
    <location>
        <begin position="573"/>
        <end position="607"/>
    </location>
</feature>
<feature type="repeat" description="PPR 8">
    <location>
        <begin position="608"/>
        <end position="642"/>
    </location>
</feature>
<feature type="domain" description="Smr" evidence="1">
    <location>
        <begin position="760"/>
        <end position="843"/>
    </location>
</feature>
<keyword id="KW-0025">Alternative splicing</keyword>
<keyword id="KW-1185">Reference proteome</keyword>
<keyword id="KW-0677">Repeat</keyword>
<gene>
    <name type="ordered locus">At1g18900</name>
    <name type="ORF">F14D16.2</name>
</gene>
<comment type="alternative products">
    <event type="alternative splicing"/>
    <isoform>
        <id>Q8GYP6-1</id>
        <name>1</name>
        <sequence type="displayed"/>
    </isoform>
    <text>A number of isoforms are produced. According to EST sequences.</text>
</comment>
<comment type="similarity">
    <text evidence="2">Belongs to the PPR family. P subfamily.</text>
</comment>
<comment type="sequence caution" evidence="2">
    <conflict type="erroneous gene model prediction">
        <sequence resource="EMBL-CDS" id="AAF79278"/>
    </conflict>
</comment>
<comment type="online information" name="Pentatricopeptide repeat proteins">
    <link uri="https://ppr.plantenergy.uwa.edu.au"/>
</comment>
<evidence type="ECO:0000255" key="1">
    <source>
        <dbReference type="PROSITE-ProRule" id="PRU00321"/>
    </source>
</evidence>
<evidence type="ECO:0000305" key="2"/>